<evidence type="ECO:0000255" key="1">
    <source>
        <dbReference type="HAMAP-Rule" id="MF_00384"/>
    </source>
</evidence>
<accession>Q9CGD7</accession>
<organism>
    <name type="scientific">Lactococcus lactis subsp. lactis (strain IL1403)</name>
    <name type="common">Streptococcus lactis</name>
    <dbReference type="NCBI Taxonomy" id="272623"/>
    <lineage>
        <taxon>Bacteria</taxon>
        <taxon>Bacillati</taxon>
        <taxon>Bacillota</taxon>
        <taxon>Bacilli</taxon>
        <taxon>Lactobacillales</taxon>
        <taxon>Streptococcaceae</taxon>
        <taxon>Lactococcus</taxon>
    </lineage>
</organism>
<proteinExistence type="inferred from homology"/>
<reference key="1">
    <citation type="journal article" date="2001" name="Genome Res.">
        <title>The complete genome sequence of the lactic acid bacterium Lactococcus lactis ssp. lactis IL1403.</title>
        <authorList>
            <person name="Bolotin A."/>
            <person name="Wincker P."/>
            <person name="Mauger S."/>
            <person name="Jaillon O."/>
            <person name="Malarme K."/>
            <person name="Weissenbach J."/>
            <person name="Ehrlich S.D."/>
            <person name="Sorokin A."/>
        </authorList>
    </citation>
    <scope>NUCLEOTIDE SEQUENCE [LARGE SCALE GENOMIC DNA]</scope>
    <source>
        <strain>IL1403</strain>
    </source>
</reference>
<protein>
    <recommendedName>
        <fullName evidence="1">Homoserine kinase</fullName>
        <shortName evidence="1">HK</shortName>
        <shortName evidence="1">HSK</shortName>
        <ecNumber evidence="1">2.7.1.39</ecNumber>
    </recommendedName>
</protein>
<dbReference type="EC" id="2.7.1.39" evidence="1"/>
<dbReference type="EMBL" id="AE005176">
    <property type="protein sequence ID" value="AAK05258.1"/>
    <property type="molecule type" value="Genomic_DNA"/>
</dbReference>
<dbReference type="PIR" id="H86769">
    <property type="entry name" value="H86769"/>
</dbReference>
<dbReference type="RefSeq" id="NP_267316.1">
    <property type="nucleotide sequence ID" value="NC_002662.1"/>
</dbReference>
<dbReference type="RefSeq" id="WP_003132119.1">
    <property type="nucleotide sequence ID" value="NC_002662.1"/>
</dbReference>
<dbReference type="SMR" id="Q9CGD7"/>
<dbReference type="PaxDb" id="272623-L0091"/>
<dbReference type="EnsemblBacteria" id="AAK05258">
    <property type="protein sequence ID" value="AAK05258"/>
    <property type="gene ID" value="L0091"/>
</dbReference>
<dbReference type="KEGG" id="lla:L0091"/>
<dbReference type="PATRIC" id="fig|272623.7.peg.1240"/>
<dbReference type="eggNOG" id="COG0083">
    <property type="taxonomic scope" value="Bacteria"/>
</dbReference>
<dbReference type="HOGENOM" id="CLU_041243_0_0_9"/>
<dbReference type="OrthoDB" id="9769912at2"/>
<dbReference type="UniPathway" id="UPA00050">
    <property type="reaction ID" value="UER00064"/>
</dbReference>
<dbReference type="Proteomes" id="UP000002196">
    <property type="component" value="Chromosome"/>
</dbReference>
<dbReference type="GO" id="GO:0005737">
    <property type="term" value="C:cytoplasm"/>
    <property type="evidence" value="ECO:0007669"/>
    <property type="project" value="UniProtKB-SubCell"/>
</dbReference>
<dbReference type="GO" id="GO:0005524">
    <property type="term" value="F:ATP binding"/>
    <property type="evidence" value="ECO:0007669"/>
    <property type="project" value="UniProtKB-UniRule"/>
</dbReference>
<dbReference type="GO" id="GO:0004413">
    <property type="term" value="F:homoserine kinase activity"/>
    <property type="evidence" value="ECO:0007669"/>
    <property type="project" value="UniProtKB-UniRule"/>
</dbReference>
<dbReference type="GO" id="GO:0009088">
    <property type="term" value="P:threonine biosynthetic process"/>
    <property type="evidence" value="ECO:0007669"/>
    <property type="project" value="UniProtKB-UniRule"/>
</dbReference>
<dbReference type="Gene3D" id="3.30.230.10">
    <property type="match status" value="1"/>
</dbReference>
<dbReference type="Gene3D" id="3.30.70.890">
    <property type="entry name" value="GHMP kinase, C-terminal domain"/>
    <property type="match status" value="1"/>
</dbReference>
<dbReference type="HAMAP" id="MF_00384">
    <property type="entry name" value="Homoser_kinase"/>
    <property type="match status" value="1"/>
</dbReference>
<dbReference type="InterPro" id="IPR013750">
    <property type="entry name" value="GHMP_kinase_C_dom"/>
</dbReference>
<dbReference type="InterPro" id="IPR036554">
    <property type="entry name" value="GHMP_kinase_C_sf"/>
</dbReference>
<dbReference type="InterPro" id="IPR006204">
    <property type="entry name" value="GHMP_kinase_N_dom"/>
</dbReference>
<dbReference type="InterPro" id="IPR006203">
    <property type="entry name" value="GHMP_knse_ATP-bd_CS"/>
</dbReference>
<dbReference type="InterPro" id="IPR000870">
    <property type="entry name" value="Homoserine_kinase"/>
</dbReference>
<dbReference type="InterPro" id="IPR020568">
    <property type="entry name" value="Ribosomal_Su5_D2-typ_SF"/>
</dbReference>
<dbReference type="InterPro" id="IPR014721">
    <property type="entry name" value="Ribsml_uS5_D2-typ_fold_subgr"/>
</dbReference>
<dbReference type="NCBIfam" id="TIGR00191">
    <property type="entry name" value="thrB"/>
    <property type="match status" value="1"/>
</dbReference>
<dbReference type="PANTHER" id="PTHR20861:SF1">
    <property type="entry name" value="HOMOSERINE KINASE"/>
    <property type="match status" value="1"/>
</dbReference>
<dbReference type="PANTHER" id="PTHR20861">
    <property type="entry name" value="HOMOSERINE/4-DIPHOSPHOCYTIDYL-2-C-METHYL-D-ERYTHRITOL KINASE"/>
    <property type="match status" value="1"/>
</dbReference>
<dbReference type="Pfam" id="PF08544">
    <property type="entry name" value="GHMP_kinases_C"/>
    <property type="match status" value="1"/>
</dbReference>
<dbReference type="Pfam" id="PF00288">
    <property type="entry name" value="GHMP_kinases_N"/>
    <property type="match status" value="1"/>
</dbReference>
<dbReference type="PIRSF" id="PIRSF000676">
    <property type="entry name" value="Homoser_kin"/>
    <property type="match status" value="1"/>
</dbReference>
<dbReference type="PRINTS" id="PR00958">
    <property type="entry name" value="HOMSERKINASE"/>
</dbReference>
<dbReference type="SUPFAM" id="SSF55060">
    <property type="entry name" value="GHMP Kinase, C-terminal domain"/>
    <property type="match status" value="1"/>
</dbReference>
<dbReference type="SUPFAM" id="SSF54211">
    <property type="entry name" value="Ribosomal protein S5 domain 2-like"/>
    <property type="match status" value="1"/>
</dbReference>
<dbReference type="PROSITE" id="PS00627">
    <property type="entry name" value="GHMP_KINASES_ATP"/>
    <property type="match status" value="1"/>
</dbReference>
<feature type="chain" id="PRO_0000156578" description="Homoserine kinase">
    <location>
        <begin position="1"/>
        <end position="296"/>
    </location>
</feature>
<feature type="binding site" evidence="1">
    <location>
        <begin position="84"/>
        <end position="94"/>
    </location>
    <ligand>
        <name>ATP</name>
        <dbReference type="ChEBI" id="CHEBI:30616"/>
    </ligand>
</feature>
<keyword id="KW-0028">Amino-acid biosynthesis</keyword>
<keyword id="KW-0067">ATP-binding</keyword>
<keyword id="KW-0963">Cytoplasm</keyword>
<keyword id="KW-0418">Kinase</keyword>
<keyword id="KW-0547">Nucleotide-binding</keyword>
<keyword id="KW-1185">Reference proteome</keyword>
<keyword id="KW-0791">Threonine biosynthesis</keyword>
<keyword id="KW-0808">Transferase</keyword>
<name>KHSE_LACLA</name>
<gene>
    <name evidence="1" type="primary">thrB</name>
    <name type="ordered locus">LL1160</name>
    <name type="ORF">L0091</name>
</gene>
<sequence>MKIIVPATSANLGAGFDSIGIAVNLYLTVEVLEESNDWKIDHDLGNNIPTDEKNLLLTTLSAVLKAKNSSLSAKYHLKMTSEVPLARGLGSSSSVIIAGIELANQLAKLNLTTEEKLELACEIEGHPDNVAPALLGNLVIASTVADKTNYVSSDFPSCKLLAFVPDYELKTVESRKVLPKELAYKEAVAASSIANVLTASLLTKNLKVAGQMIESDHFHENYRASLVPELKILREIGHEFGAYGTYLSGAGPTVMLLLPDDKLNLLTEKINEQNLSGQLYSLEVDSNGLQVKESVL</sequence>
<comment type="function">
    <text evidence="1">Catalyzes the ATP-dependent phosphorylation of L-homoserine to L-homoserine phosphate.</text>
</comment>
<comment type="catalytic activity">
    <reaction evidence="1">
        <text>L-homoserine + ATP = O-phospho-L-homoserine + ADP + H(+)</text>
        <dbReference type="Rhea" id="RHEA:13985"/>
        <dbReference type="ChEBI" id="CHEBI:15378"/>
        <dbReference type="ChEBI" id="CHEBI:30616"/>
        <dbReference type="ChEBI" id="CHEBI:57476"/>
        <dbReference type="ChEBI" id="CHEBI:57590"/>
        <dbReference type="ChEBI" id="CHEBI:456216"/>
        <dbReference type="EC" id="2.7.1.39"/>
    </reaction>
</comment>
<comment type="pathway">
    <text evidence="1">Amino-acid biosynthesis; L-threonine biosynthesis; L-threonine from L-aspartate: step 4/5.</text>
</comment>
<comment type="subcellular location">
    <subcellularLocation>
        <location evidence="1">Cytoplasm</location>
    </subcellularLocation>
</comment>
<comment type="similarity">
    <text evidence="1">Belongs to the GHMP kinase family. Homoserine kinase subfamily.</text>
</comment>